<reference key="1">
    <citation type="journal article" date="2004" name="Proc. Natl. Acad. Sci. U.S.A.">
        <title>Genomic analysis of Bacteroides fragilis reveals extensive DNA inversions regulating cell surface adaptation.</title>
        <authorList>
            <person name="Kuwahara T."/>
            <person name="Yamashita A."/>
            <person name="Hirakawa H."/>
            <person name="Nakayama H."/>
            <person name="Toh H."/>
            <person name="Okada N."/>
            <person name="Kuhara S."/>
            <person name="Hattori M."/>
            <person name="Hayashi T."/>
            <person name="Ohnishi Y."/>
        </authorList>
    </citation>
    <scope>NUCLEOTIDE SEQUENCE [LARGE SCALE GENOMIC DNA]</scope>
    <source>
        <strain>YCH46</strain>
    </source>
</reference>
<keyword id="KW-0687">Ribonucleoprotein</keyword>
<keyword id="KW-0689">Ribosomal protein</keyword>
<organism>
    <name type="scientific">Bacteroides fragilis (strain YCH46)</name>
    <dbReference type="NCBI Taxonomy" id="295405"/>
    <lineage>
        <taxon>Bacteria</taxon>
        <taxon>Pseudomonadati</taxon>
        <taxon>Bacteroidota</taxon>
        <taxon>Bacteroidia</taxon>
        <taxon>Bacteroidales</taxon>
        <taxon>Bacteroidaceae</taxon>
        <taxon>Bacteroides</taxon>
    </lineage>
</organism>
<feature type="chain" id="PRO_0000243776" description="Small ribosomal subunit protein bS16">
    <location>
        <begin position="1"/>
        <end position="181"/>
    </location>
</feature>
<feature type="region of interest" description="Disordered" evidence="2">
    <location>
        <begin position="150"/>
        <end position="181"/>
    </location>
</feature>
<feature type="compositionally biased region" description="Low complexity" evidence="2">
    <location>
        <begin position="158"/>
        <end position="181"/>
    </location>
</feature>
<gene>
    <name evidence="1" type="primary">rpsP</name>
    <name type="ordered locus">BF2716</name>
</gene>
<sequence length="181" mass="19609">MATRIRLQRHGRKSYAFYSIVIADSRAPRDGKFTEKIGTYNPNTNPATVDLNFERALHWVLVGAQPSDTVRNILSREGVYMKKHLLGGVAKGAFGEAEAEAKFEAWKNNKQSGLSALKAKEEEAKKAEAKARLEAEKKVNEVKAKALAEKKAAEEAAKAAAEAPAEEAAPAEETATEAAAE</sequence>
<dbReference type="EMBL" id="AP006841">
    <property type="protein sequence ID" value="BAD49466.1"/>
    <property type="molecule type" value="Genomic_DNA"/>
</dbReference>
<dbReference type="RefSeq" id="WP_011202986.1">
    <property type="nucleotide sequence ID" value="NC_006347.1"/>
</dbReference>
<dbReference type="RefSeq" id="YP_100000.1">
    <property type="nucleotide sequence ID" value="NC_006347.1"/>
</dbReference>
<dbReference type="SMR" id="Q64SR3"/>
<dbReference type="STRING" id="295405.BF2716"/>
<dbReference type="KEGG" id="bfr:BF2716"/>
<dbReference type="PATRIC" id="fig|295405.11.peg.2623"/>
<dbReference type="HOGENOM" id="CLU_100590_0_0_10"/>
<dbReference type="OrthoDB" id="9807878at2"/>
<dbReference type="Proteomes" id="UP000002197">
    <property type="component" value="Chromosome"/>
</dbReference>
<dbReference type="GO" id="GO:0005737">
    <property type="term" value="C:cytoplasm"/>
    <property type="evidence" value="ECO:0007669"/>
    <property type="project" value="UniProtKB-ARBA"/>
</dbReference>
<dbReference type="GO" id="GO:0015935">
    <property type="term" value="C:small ribosomal subunit"/>
    <property type="evidence" value="ECO:0007669"/>
    <property type="project" value="TreeGrafter"/>
</dbReference>
<dbReference type="GO" id="GO:0003735">
    <property type="term" value="F:structural constituent of ribosome"/>
    <property type="evidence" value="ECO:0007669"/>
    <property type="project" value="InterPro"/>
</dbReference>
<dbReference type="GO" id="GO:0006412">
    <property type="term" value="P:translation"/>
    <property type="evidence" value="ECO:0007669"/>
    <property type="project" value="UniProtKB-UniRule"/>
</dbReference>
<dbReference type="FunFam" id="3.30.1320.10:FF:000006">
    <property type="entry name" value="30S ribosomal protein S16"/>
    <property type="match status" value="1"/>
</dbReference>
<dbReference type="Gene3D" id="3.30.1320.10">
    <property type="match status" value="1"/>
</dbReference>
<dbReference type="HAMAP" id="MF_00385">
    <property type="entry name" value="Ribosomal_bS16"/>
    <property type="match status" value="1"/>
</dbReference>
<dbReference type="InterPro" id="IPR000307">
    <property type="entry name" value="Ribosomal_bS16"/>
</dbReference>
<dbReference type="InterPro" id="IPR023803">
    <property type="entry name" value="Ribosomal_bS16_dom_sf"/>
</dbReference>
<dbReference type="NCBIfam" id="NF011094">
    <property type="entry name" value="PRK14521.1"/>
    <property type="match status" value="1"/>
</dbReference>
<dbReference type="NCBIfam" id="TIGR00002">
    <property type="entry name" value="S16"/>
    <property type="match status" value="1"/>
</dbReference>
<dbReference type="PANTHER" id="PTHR12919">
    <property type="entry name" value="30S RIBOSOMAL PROTEIN S16"/>
    <property type="match status" value="1"/>
</dbReference>
<dbReference type="PANTHER" id="PTHR12919:SF20">
    <property type="entry name" value="SMALL RIBOSOMAL SUBUNIT PROTEIN BS16M"/>
    <property type="match status" value="1"/>
</dbReference>
<dbReference type="Pfam" id="PF00886">
    <property type="entry name" value="Ribosomal_S16"/>
    <property type="match status" value="1"/>
</dbReference>
<dbReference type="SUPFAM" id="SSF54565">
    <property type="entry name" value="Ribosomal protein S16"/>
    <property type="match status" value="1"/>
</dbReference>
<evidence type="ECO:0000255" key="1">
    <source>
        <dbReference type="HAMAP-Rule" id="MF_00385"/>
    </source>
</evidence>
<evidence type="ECO:0000256" key="2">
    <source>
        <dbReference type="SAM" id="MobiDB-lite"/>
    </source>
</evidence>
<evidence type="ECO:0000305" key="3"/>
<comment type="similarity">
    <text evidence="1">Belongs to the bacterial ribosomal protein bS16 family.</text>
</comment>
<accession>Q64SR3</accession>
<proteinExistence type="inferred from homology"/>
<name>RS16_BACFR</name>
<protein>
    <recommendedName>
        <fullName evidence="1">Small ribosomal subunit protein bS16</fullName>
    </recommendedName>
    <alternativeName>
        <fullName evidence="3">30S ribosomal protein S16</fullName>
    </alternativeName>
</protein>